<comment type="function">
    <text evidence="1">Forms a chaperone-bound H2A.Z-H2B complex that acts as a source for SWR1 complex-dependent H2A to H2A.Z histone replacement in chromatin.</text>
</comment>
<comment type="subunit">
    <text evidence="1">Forms a heterotrimer with H2A.Z-H2B, stabilizing the association of the histone dimer. Also, with a lower affinity, forms a heterotrimer with H2A-H2B (By similarity).</text>
</comment>
<comment type="subcellular location">
    <subcellularLocation>
        <location evidence="1">Nucleus</location>
    </subcellularLocation>
</comment>
<comment type="similarity">
    <text evidence="3">Belongs to the CHZ1 family.</text>
</comment>
<gene>
    <name type="primary">CHZ1</name>
    <name type="ORF">PICST_32972</name>
</gene>
<organism>
    <name type="scientific">Scheffersomyces stipitis (strain ATCC 58785 / CBS 6054 / NBRC 10063 / NRRL Y-11545)</name>
    <name type="common">Yeast</name>
    <name type="synonym">Pichia stipitis</name>
    <dbReference type="NCBI Taxonomy" id="322104"/>
    <lineage>
        <taxon>Eukaryota</taxon>
        <taxon>Fungi</taxon>
        <taxon>Dikarya</taxon>
        <taxon>Ascomycota</taxon>
        <taxon>Saccharomycotina</taxon>
        <taxon>Pichiomycetes</taxon>
        <taxon>Debaryomycetaceae</taxon>
        <taxon>Scheffersomyces</taxon>
    </lineage>
</organism>
<accession>A3LXX5</accession>
<name>CHZ1_PICST</name>
<keyword id="KW-0143">Chaperone</keyword>
<keyword id="KW-0539">Nucleus</keyword>
<keyword id="KW-1185">Reference proteome</keyword>
<evidence type="ECO:0000250" key="1"/>
<evidence type="ECO:0000256" key="2">
    <source>
        <dbReference type="SAM" id="MobiDB-lite"/>
    </source>
</evidence>
<evidence type="ECO:0000305" key="3"/>
<protein>
    <recommendedName>
        <fullName>Histone H2A.Z-specific chaperone CHZ1</fullName>
    </recommendedName>
</protein>
<sequence>MSEEKKEAVVEPKAEEVKEKEQIEEKEVEEEEGTNKRTSEEKDKKKHKKRRRRQYDDDVPKDSETKEAAEDDEEEEDGEFDENNLENEEDVEDDLAEIDTANIITTGRRTRRKVIDFAKAAKELDAENGVVREDDEEEEDGEFEVKE</sequence>
<proteinExistence type="inferred from homology"/>
<feature type="chain" id="PRO_0000330219" description="Histone H2A.Z-specific chaperone CHZ1">
    <location>
        <begin position="1"/>
        <end position="147"/>
    </location>
</feature>
<feature type="region of interest" description="Disordered" evidence="2">
    <location>
        <begin position="1"/>
        <end position="98"/>
    </location>
</feature>
<feature type="region of interest" description="Disordered" evidence="2">
    <location>
        <begin position="128"/>
        <end position="147"/>
    </location>
</feature>
<feature type="compositionally biased region" description="Basic and acidic residues" evidence="2">
    <location>
        <begin position="1"/>
        <end position="25"/>
    </location>
</feature>
<feature type="compositionally biased region" description="Basic and acidic residues" evidence="2">
    <location>
        <begin position="33"/>
        <end position="43"/>
    </location>
</feature>
<feature type="compositionally biased region" description="Basic residues" evidence="2">
    <location>
        <begin position="44"/>
        <end position="53"/>
    </location>
</feature>
<feature type="compositionally biased region" description="Basic and acidic residues" evidence="2">
    <location>
        <begin position="54"/>
        <end position="68"/>
    </location>
</feature>
<feature type="compositionally biased region" description="Acidic residues" evidence="2">
    <location>
        <begin position="69"/>
        <end position="97"/>
    </location>
</feature>
<feature type="compositionally biased region" description="Acidic residues" evidence="2">
    <location>
        <begin position="133"/>
        <end position="147"/>
    </location>
</feature>
<dbReference type="EMBL" id="CP000500">
    <property type="protein sequence ID" value="ABN67539.1"/>
    <property type="molecule type" value="Genomic_DNA"/>
</dbReference>
<dbReference type="SMR" id="A3LXX5"/>
<dbReference type="STRING" id="322104.A3LXX5"/>
<dbReference type="KEGG" id="pic:PICST_32972"/>
<dbReference type="eggNOG" id="ENOG502SCUM">
    <property type="taxonomic scope" value="Eukaryota"/>
</dbReference>
<dbReference type="HOGENOM" id="CLU_126134_0_0_1"/>
<dbReference type="InParanoid" id="A3LXX5"/>
<dbReference type="OMA" id="RTHYDDE"/>
<dbReference type="Proteomes" id="UP000002258">
    <property type="component" value="Chromosome 6"/>
</dbReference>
<dbReference type="GO" id="GO:0005634">
    <property type="term" value="C:nucleus"/>
    <property type="evidence" value="ECO:0007669"/>
    <property type="project" value="UniProtKB-SubCell"/>
</dbReference>
<dbReference type="InterPro" id="IPR019098">
    <property type="entry name" value="Histone_chaperone_domain_CHZ"/>
</dbReference>
<dbReference type="Pfam" id="PF09649">
    <property type="entry name" value="CHZ"/>
    <property type="match status" value="1"/>
</dbReference>
<dbReference type="SMART" id="SM01082">
    <property type="entry name" value="CHZ"/>
    <property type="match status" value="1"/>
</dbReference>
<reference key="1">
    <citation type="journal article" date="2007" name="Nat. Biotechnol.">
        <title>Genome sequence of the lignocellulose-bioconverting and xylose-fermenting yeast Pichia stipitis.</title>
        <authorList>
            <person name="Jeffries T.W."/>
            <person name="Grigoriev I.V."/>
            <person name="Grimwood J."/>
            <person name="Laplaza J.M."/>
            <person name="Aerts A."/>
            <person name="Salamov A."/>
            <person name="Schmutz J."/>
            <person name="Lindquist E."/>
            <person name="Dehal P."/>
            <person name="Shapiro H."/>
            <person name="Jin Y.-S."/>
            <person name="Passoth V."/>
            <person name="Richardson P.M."/>
        </authorList>
    </citation>
    <scope>NUCLEOTIDE SEQUENCE [LARGE SCALE GENOMIC DNA]</scope>
    <source>
        <strain>ATCC 58785 / CBS 6054 / NBRC 10063 / NRRL Y-11545</strain>
    </source>
</reference>